<sequence length="104" mass="12265">MIRKAFVMQVNPDAHEEYQRRHNPIWPELEAVLKSHGAHNYAIYLDKARNLLFAMVEIESEERWNAVASTDVCQRWWKYMTDVMPANPDNSPVSSELQEVFYLP</sequence>
<keyword id="KW-0119">Carbohydrate metabolism</keyword>
<keyword id="KW-0963">Cytoplasm</keyword>
<keyword id="KW-0413">Isomerase</keyword>
<keyword id="KW-0684">Rhamnose metabolism</keyword>
<proteinExistence type="inferred from homology"/>
<organism>
    <name type="scientific">Escherichia coli (strain K12 / MC4100 / BW2952)</name>
    <dbReference type="NCBI Taxonomy" id="595496"/>
    <lineage>
        <taxon>Bacteria</taxon>
        <taxon>Pseudomonadati</taxon>
        <taxon>Pseudomonadota</taxon>
        <taxon>Gammaproteobacteria</taxon>
        <taxon>Enterobacterales</taxon>
        <taxon>Enterobacteriaceae</taxon>
        <taxon>Escherichia</taxon>
    </lineage>
</organism>
<evidence type="ECO:0000255" key="1">
    <source>
        <dbReference type="HAMAP-Rule" id="MF_01663"/>
    </source>
</evidence>
<feature type="chain" id="PRO_1000215872" description="L-rhamnose mutarotase">
    <location>
        <begin position="1"/>
        <end position="104"/>
    </location>
</feature>
<feature type="active site" description="Proton donor" evidence="1">
    <location>
        <position position="22"/>
    </location>
</feature>
<feature type="binding site" evidence="1">
    <location>
        <position position="18"/>
    </location>
    <ligand>
        <name>substrate</name>
    </ligand>
</feature>
<feature type="binding site" evidence="1">
    <location>
        <position position="41"/>
    </location>
    <ligand>
        <name>substrate</name>
    </ligand>
</feature>
<feature type="binding site" evidence="1">
    <location>
        <begin position="76"/>
        <end position="77"/>
    </location>
    <ligand>
        <name>substrate</name>
    </ligand>
</feature>
<accession>C5A069</accession>
<dbReference type="EC" id="5.1.3.32" evidence="1"/>
<dbReference type="EMBL" id="CP001396">
    <property type="protein sequence ID" value="ACR63674.1"/>
    <property type="molecule type" value="Genomic_DNA"/>
</dbReference>
<dbReference type="RefSeq" id="WP_000619493.1">
    <property type="nucleotide sequence ID" value="NC_012759.1"/>
</dbReference>
<dbReference type="SMR" id="C5A069"/>
<dbReference type="GeneID" id="75174142"/>
<dbReference type="KEGG" id="ebw:BWG_3571"/>
<dbReference type="HOGENOM" id="CLU_100689_2_0_6"/>
<dbReference type="UniPathway" id="UPA00125"/>
<dbReference type="GO" id="GO:0005737">
    <property type="term" value="C:cytoplasm"/>
    <property type="evidence" value="ECO:0007669"/>
    <property type="project" value="UniProtKB-SubCell"/>
</dbReference>
<dbReference type="GO" id="GO:0062192">
    <property type="term" value="F:L-rhamnose mutarotase activity"/>
    <property type="evidence" value="ECO:0007669"/>
    <property type="project" value="UniProtKB-EC"/>
</dbReference>
<dbReference type="GO" id="GO:0019301">
    <property type="term" value="P:rhamnose catabolic process"/>
    <property type="evidence" value="ECO:0007669"/>
    <property type="project" value="TreeGrafter"/>
</dbReference>
<dbReference type="FunFam" id="3.30.70.100:FF:000013">
    <property type="entry name" value="L-rhamnose mutarotase"/>
    <property type="match status" value="1"/>
</dbReference>
<dbReference type="Gene3D" id="3.30.70.100">
    <property type="match status" value="1"/>
</dbReference>
<dbReference type="HAMAP" id="MF_01663">
    <property type="entry name" value="L_rham_rotase"/>
    <property type="match status" value="1"/>
</dbReference>
<dbReference type="InterPro" id="IPR011008">
    <property type="entry name" value="Dimeric_a/b-barrel"/>
</dbReference>
<dbReference type="InterPro" id="IPR013448">
    <property type="entry name" value="L-rhamnose_mutarotase"/>
</dbReference>
<dbReference type="InterPro" id="IPR008000">
    <property type="entry name" value="Rham/fucose_mutarotase"/>
</dbReference>
<dbReference type="NCBIfam" id="TIGR02625">
    <property type="entry name" value="YiiL_rotase"/>
    <property type="match status" value="1"/>
</dbReference>
<dbReference type="PANTHER" id="PTHR34389">
    <property type="entry name" value="L-RHAMNOSE MUTAROTASE"/>
    <property type="match status" value="1"/>
</dbReference>
<dbReference type="PANTHER" id="PTHR34389:SF2">
    <property type="entry name" value="L-RHAMNOSE MUTAROTASE"/>
    <property type="match status" value="1"/>
</dbReference>
<dbReference type="Pfam" id="PF05336">
    <property type="entry name" value="rhaM"/>
    <property type="match status" value="1"/>
</dbReference>
<dbReference type="SUPFAM" id="SSF54909">
    <property type="entry name" value="Dimeric alpha+beta barrel"/>
    <property type="match status" value="1"/>
</dbReference>
<gene>
    <name evidence="1" type="primary">rhaM</name>
    <name type="ordered locus">BWG_3571</name>
</gene>
<name>RHAM_ECOBW</name>
<comment type="function">
    <text evidence="1">Involved in the anomeric conversion of L-rhamnose.</text>
</comment>
<comment type="catalytic activity">
    <reaction evidence="1">
        <text>alpha-L-rhamnose = beta-L-rhamnose</text>
        <dbReference type="Rhea" id="RHEA:25584"/>
        <dbReference type="ChEBI" id="CHEBI:27586"/>
        <dbReference type="ChEBI" id="CHEBI:27907"/>
        <dbReference type="EC" id="5.1.3.32"/>
    </reaction>
</comment>
<comment type="pathway">
    <text evidence="1">Carbohydrate metabolism; L-rhamnose metabolism.</text>
</comment>
<comment type="subunit">
    <text evidence="1">Homodimer.</text>
</comment>
<comment type="subcellular location">
    <subcellularLocation>
        <location evidence="1">Cytoplasm</location>
    </subcellularLocation>
</comment>
<comment type="similarity">
    <text evidence="1">Belongs to the rhamnose mutarotase family.</text>
</comment>
<reference key="1">
    <citation type="journal article" date="2009" name="J. Bacteriol.">
        <title>Genomic sequencing reveals regulatory mutations and recombinational events in the widely used MC4100 lineage of Escherichia coli K-12.</title>
        <authorList>
            <person name="Ferenci T."/>
            <person name="Zhou Z."/>
            <person name="Betteridge T."/>
            <person name="Ren Y."/>
            <person name="Liu Y."/>
            <person name="Feng L."/>
            <person name="Reeves P.R."/>
            <person name="Wang L."/>
        </authorList>
    </citation>
    <scope>NUCLEOTIDE SEQUENCE [LARGE SCALE GENOMIC DNA]</scope>
    <source>
        <strain>K12 / MC4100 / BW2952</strain>
    </source>
</reference>
<protein>
    <recommendedName>
        <fullName evidence="1">L-rhamnose mutarotase</fullName>
        <ecNumber evidence="1">5.1.3.32</ecNumber>
    </recommendedName>
    <alternativeName>
        <fullName evidence="1">Rhamnose 1-epimerase</fullName>
    </alternativeName>
    <alternativeName>
        <fullName evidence="1">Type-3 mutarotase</fullName>
    </alternativeName>
</protein>